<protein>
    <recommendedName>
        <fullName>Peptidyl-prolyl cis-trans isomerase A</fullName>
        <shortName>PPIase A</shortName>
        <ecNumber evidence="2">5.2.1.8</ecNumber>
    </recommendedName>
    <alternativeName>
        <fullName>Cyclophilin A</fullName>
    </alternativeName>
    <alternativeName>
        <fullName>Cyclosporin A-binding protein</fullName>
    </alternativeName>
    <alternativeName>
        <fullName>Rotamase A</fullName>
    </alternativeName>
    <component>
        <recommendedName>
            <fullName>Peptidyl-prolyl cis-trans isomerase A, N-terminally processed</fullName>
        </recommendedName>
    </component>
</protein>
<keyword id="KW-0007">Acetylation</keyword>
<keyword id="KW-0053">Apoptosis</keyword>
<keyword id="KW-0963">Cytoplasm</keyword>
<keyword id="KW-0325">Glycoprotein</keyword>
<keyword id="KW-0413">Isomerase</keyword>
<keyword id="KW-1017">Isopeptide bond</keyword>
<keyword id="KW-0539">Nucleus</keyword>
<keyword id="KW-0597">Phosphoprotein</keyword>
<keyword id="KW-0697">Rotamase</keyword>
<keyword id="KW-0964">Secreted</keyword>
<keyword id="KW-0832">Ubl conjugation</keyword>
<feature type="chain" id="PRO_0000423241" description="Peptidyl-prolyl cis-trans isomerase A">
    <location>
        <begin position="1"/>
        <end position="165"/>
    </location>
</feature>
<feature type="initiator methionine" description="Removed; alternate" evidence="2">
    <location>
        <position position="1"/>
    </location>
</feature>
<feature type="chain" id="PRO_0000260460" description="Peptidyl-prolyl cis-trans isomerase A, N-terminally processed">
    <location>
        <begin position="2"/>
        <end position="165"/>
    </location>
</feature>
<feature type="domain" description="PPIase cyclophilin-type" evidence="4">
    <location>
        <begin position="7"/>
        <end position="163"/>
    </location>
</feature>
<feature type="modified residue" description="N-acetylmethionine" evidence="2">
    <location>
        <position position="1"/>
    </location>
</feature>
<feature type="modified residue" description="N-acetylvaline; in Peptidyl-prolyl cis-trans isomerase A, N-terminally processed" evidence="2">
    <location>
        <position position="2"/>
    </location>
</feature>
<feature type="modified residue" description="N6-acetyllysine; alternate" evidence="2">
    <location>
        <position position="28"/>
    </location>
</feature>
<feature type="modified residue" description="N6-acetyllysine" evidence="2">
    <location>
        <position position="44"/>
    </location>
</feature>
<feature type="modified residue" description="N6-acetyllysine" evidence="2">
    <location>
        <position position="76"/>
    </location>
</feature>
<feature type="modified residue" description="Phosphoserine" evidence="2">
    <location>
        <position position="77"/>
    </location>
</feature>
<feature type="modified residue" description="N6-acetyllysine; alternate" evidence="2">
    <location>
        <position position="82"/>
    </location>
</feature>
<feature type="modified residue" description="Phosphothreonine" evidence="2">
    <location>
        <position position="93"/>
    </location>
</feature>
<feature type="modified residue" description="N6-acetyllysine" evidence="2">
    <location>
        <position position="125"/>
    </location>
</feature>
<feature type="modified residue" description="N6-acetyllysine" evidence="2">
    <location>
        <position position="131"/>
    </location>
</feature>
<feature type="modified residue" description="N6-acetyllysine" evidence="1">
    <location>
        <position position="133"/>
    </location>
</feature>
<feature type="glycosylation site" description="N-linked (GlcNAc...) asparagine" evidence="3">
    <location>
        <position position="108"/>
    </location>
</feature>
<feature type="cross-link" description="Glycyl lysine isopeptide (Lys-Gly) (interchain with G-Cter in SUMO2); alternate" evidence="2">
    <location>
        <position position="28"/>
    </location>
</feature>
<feature type="cross-link" description="Glycyl lysine isopeptide (Lys-Gly) (interchain with G-Cter in ubiquitin); alternate" evidence="2">
    <location>
        <position position="28"/>
    </location>
</feature>
<feature type="cross-link" description="Glycyl lysine isopeptide (Lys-Gly) (interchain with G-Cter in SUMO2); alternate" evidence="2">
    <location>
        <position position="82"/>
    </location>
</feature>
<proteinExistence type="inferred from homology"/>
<accession>Q0ZQK8</accession>
<reference key="1">
    <citation type="journal article" date="2006" name="Retrovirology">
        <title>Patterns of evolution of host proteins involved in retroviral pathogenesis.</title>
        <authorList>
            <person name="Ortiz M."/>
            <person name="Bleiber G."/>
            <person name="Martinez R."/>
            <person name="Kaessmann H."/>
            <person name="Telenti A."/>
        </authorList>
    </citation>
    <scope>NUCLEOTIDE SEQUENCE [GENOMIC DNA]</scope>
</reference>
<gene>
    <name type="primary">PPIA</name>
</gene>
<dbReference type="EC" id="5.2.1.8" evidence="2"/>
<dbReference type="EMBL" id="DQ251279">
    <property type="protein sequence ID" value="ABB77879.1"/>
    <property type="molecule type" value="Genomic_DNA"/>
</dbReference>
<dbReference type="SMR" id="Q0ZQK8"/>
<dbReference type="GlyCosmos" id="Q0ZQK8">
    <property type="glycosylation" value="1 site, No reported glycans"/>
</dbReference>
<dbReference type="GO" id="GO:0005737">
    <property type="term" value="C:cytoplasm"/>
    <property type="evidence" value="ECO:0000250"/>
    <property type="project" value="UniProtKB"/>
</dbReference>
<dbReference type="GO" id="GO:0005829">
    <property type="term" value="C:cytosol"/>
    <property type="evidence" value="ECO:0000250"/>
    <property type="project" value="UniProtKB"/>
</dbReference>
<dbReference type="GO" id="GO:0005576">
    <property type="term" value="C:extracellular region"/>
    <property type="evidence" value="ECO:0000250"/>
    <property type="project" value="UniProtKB"/>
</dbReference>
<dbReference type="GO" id="GO:0005634">
    <property type="term" value="C:nucleus"/>
    <property type="evidence" value="ECO:0000250"/>
    <property type="project" value="UniProtKB"/>
</dbReference>
<dbReference type="GO" id="GO:0016018">
    <property type="term" value="F:cyclosporin A binding"/>
    <property type="evidence" value="ECO:0007669"/>
    <property type="project" value="TreeGrafter"/>
</dbReference>
<dbReference type="GO" id="GO:1904399">
    <property type="term" value="F:heparan sulfate binding"/>
    <property type="evidence" value="ECO:0000250"/>
    <property type="project" value="UniProtKB"/>
</dbReference>
<dbReference type="GO" id="GO:0005178">
    <property type="term" value="F:integrin binding"/>
    <property type="evidence" value="ECO:0000250"/>
    <property type="project" value="UniProtKB"/>
</dbReference>
<dbReference type="GO" id="GO:0003755">
    <property type="term" value="F:peptidyl-prolyl cis-trans isomerase activity"/>
    <property type="evidence" value="ECO:0000250"/>
    <property type="project" value="UniProtKB"/>
</dbReference>
<dbReference type="GO" id="GO:0032148">
    <property type="term" value="P:activation of protein kinase B activity"/>
    <property type="evidence" value="ECO:0000250"/>
    <property type="project" value="UniProtKB"/>
</dbReference>
<dbReference type="GO" id="GO:0006915">
    <property type="term" value="P:apoptotic process"/>
    <property type="evidence" value="ECO:0000250"/>
    <property type="project" value="UniProtKB"/>
</dbReference>
<dbReference type="GO" id="GO:0060352">
    <property type="term" value="P:cell adhesion molecule production"/>
    <property type="evidence" value="ECO:0000250"/>
    <property type="project" value="UniProtKB"/>
</dbReference>
<dbReference type="GO" id="GO:0034599">
    <property type="term" value="P:cellular response to oxidative stress"/>
    <property type="evidence" value="ECO:0000250"/>
    <property type="project" value="UniProtKB"/>
</dbReference>
<dbReference type="GO" id="GO:0042118">
    <property type="term" value="P:endothelial cell activation"/>
    <property type="evidence" value="ECO:0000250"/>
    <property type="project" value="UniProtKB"/>
</dbReference>
<dbReference type="GO" id="GO:0030595">
    <property type="term" value="P:leukocyte chemotaxis"/>
    <property type="evidence" value="ECO:0000250"/>
    <property type="project" value="UniProtKB"/>
</dbReference>
<dbReference type="GO" id="GO:1902176">
    <property type="term" value="P:negative regulation of oxidative stress-induced intrinsic apoptotic signaling pathway"/>
    <property type="evidence" value="ECO:0000250"/>
    <property type="project" value="UniProtKB"/>
</dbReference>
<dbReference type="GO" id="GO:0061944">
    <property type="term" value="P:negative regulation of protein K48-linked ubiquitination"/>
    <property type="evidence" value="ECO:0000250"/>
    <property type="project" value="UniProtKB"/>
</dbReference>
<dbReference type="GO" id="GO:0006469">
    <property type="term" value="P:negative regulation of protein kinase activity"/>
    <property type="evidence" value="ECO:0000250"/>
    <property type="project" value="UniProtKB"/>
</dbReference>
<dbReference type="GO" id="GO:0001933">
    <property type="term" value="P:negative regulation of protein phosphorylation"/>
    <property type="evidence" value="ECO:0000250"/>
    <property type="project" value="UniProtKB"/>
</dbReference>
<dbReference type="GO" id="GO:0032873">
    <property type="term" value="P:negative regulation of stress-activated MAPK cascade"/>
    <property type="evidence" value="ECO:0000250"/>
    <property type="project" value="UniProtKB"/>
</dbReference>
<dbReference type="GO" id="GO:0030593">
    <property type="term" value="P:neutrophil chemotaxis"/>
    <property type="evidence" value="ECO:0000250"/>
    <property type="project" value="UniProtKB"/>
</dbReference>
<dbReference type="GO" id="GO:0030168">
    <property type="term" value="P:platelet activation"/>
    <property type="evidence" value="ECO:0000250"/>
    <property type="project" value="UniProtKB"/>
</dbReference>
<dbReference type="GO" id="GO:0070527">
    <property type="term" value="P:platelet aggregation"/>
    <property type="evidence" value="ECO:0000250"/>
    <property type="project" value="UniProtKB"/>
</dbReference>
<dbReference type="GO" id="GO:0043410">
    <property type="term" value="P:positive regulation of MAPK cascade"/>
    <property type="evidence" value="ECO:0000250"/>
    <property type="project" value="UniProtKB"/>
</dbReference>
<dbReference type="GO" id="GO:0051092">
    <property type="term" value="P:positive regulation of NF-kappaB transcription factor activity"/>
    <property type="evidence" value="ECO:0000250"/>
    <property type="project" value="UniProtKB"/>
</dbReference>
<dbReference type="GO" id="GO:0001934">
    <property type="term" value="P:positive regulation of protein phosphorylation"/>
    <property type="evidence" value="ECO:0000250"/>
    <property type="project" value="UniProtKB"/>
</dbReference>
<dbReference type="GO" id="GO:0006457">
    <property type="term" value="P:protein folding"/>
    <property type="evidence" value="ECO:0007669"/>
    <property type="project" value="InterPro"/>
</dbReference>
<dbReference type="GO" id="GO:0000413">
    <property type="term" value="P:protein peptidyl-prolyl isomerization"/>
    <property type="evidence" value="ECO:0000250"/>
    <property type="project" value="UniProtKB"/>
</dbReference>
<dbReference type="GO" id="GO:2001233">
    <property type="term" value="P:regulation of apoptotic signaling pathway"/>
    <property type="evidence" value="ECO:0000250"/>
    <property type="project" value="UniProtKB"/>
</dbReference>
<dbReference type="GO" id="GO:0045069">
    <property type="term" value="P:regulation of viral genome replication"/>
    <property type="evidence" value="ECO:0000250"/>
    <property type="project" value="UniProtKB"/>
</dbReference>
<dbReference type="CDD" id="cd01926">
    <property type="entry name" value="cyclophilin_ABH_like"/>
    <property type="match status" value="1"/>
</dbReference>
<dbReference type="FunFam" id="2.40.100.10:FF:000011">
    <property type="entry name" value="Peptidyl-prolyl cis-trans isomerase A"/>
    <property type="match status" value="1"/>
</dbReference>
<dbReference type="Gene3D" id="2.40.100.10">
    <property type="entry name" value="Cyclophilin-like"/>
    <property type="match status" value="1"/>
</dbReference>
<dbReference type="InterPro" id="IPR029000">
    <property type="entry name" value="Cyclophilin-like_dom_sf"/>
</dbReference>
<dbReference type="InterPro" id="IPR024936">
    <property type="entry name" value="Cyclophilin-type_PPIase"/>
</dbReference>
<dbReference type="InterPro" id="IPR020892">
    <property type="entry name" value="Cyclophilin-type_PPIase_CS"/>
</dbReference>
<dbReference type="InterPro" id="IPR002130">
    <property type="entry name" value="Cyclophilin-type_PPIase_dom"/>
</dbReference>
<dbReference type="PANTHER" id="PTHR11071">
    <property type="entry name" value="PEPTIDYL-PROLYL CIS-TRANS ISOMERASE"/>
    <property type="match status" value="1"/>
</dbReference>
<dbReference type="PANTHER" id="PTHR11071:SF490">
    <property type="entry name" value="PEPTIDYL-PROLYL CIS-TRANS ISOMERASE A"/>
    <property type="match status" value="1"/>
</dbReference>
<dbReference type="Pfam" id="PF00160">
    <property type="entry name" value="Pro_isomerase"/>
    <property type="match status" value="1"/>
</dbReference>
<dbReference type="PIRSF" id="PIRSF001467">
    <property type="entry name" value="Peptidylpro_ismrse"/>
    <property type="match status" value="1"/>
</dbReference>
<dbReference type="PRINTS" id="PR00153">
    <property type="entry name" value="CSAPPISMRASE"/>
</dbReference>
<dbReference type="SUPFAM" id="SSF50891">
    <property type="entry name" value="Cyclophilin-like"/>
    <property type="match status" value="1"/>
</dbReference>
<dbReference type="PROSITE" id="PS00170">
    <property type="entry name" value="CSA_PPIASE_1"/>
    <property type="match status" value="1"/>
</dbReference>
<dbReference type="PROSITE" id="PS50072">
    <property type="entry name" value="CSA_PPIASE_2"/>
    <property type="match status" value="1"/>
</dbReference>
<evidence type="ECO:0000250" key="1">
    <source>
        <dbReference type="UniProtKB" id="P17742"/>
    </source>
</evidence>
<evidence type="ECO:0000250" key="2">
    <source>
        <dbReference type="UniProtKB" id="P62937"/>
    </source>
</evidence>
<evidence type="ECO:0000255" key="3"/>
<evidence type="ECO:0000255" key="4">
    <source>
        <dbReference type="PROSITE-ProRule" id="PRU00156"/>
    </source>
</evidence>
<evidence type="ECO:0000305" key="5"/>
<organism>
    <name type="scientific">Hylobates lar</name>
    <name type="common">Lar gibbon</name>
    <name type="synonym">White-handed gibbon</name>
    <dbReference type="NCBI Taxonomy" id="9580"/>
    <lineage>
        <taxon>Eukaryota</taxon>
        <taxon>Metazoa</taxon>
        <taxon>Chordata</taxon>
        <taxon>Craniata</taxon>
        <taxon>Vertebrata</taxon>
        <taxon>Euteleostomi</taxon>
        <taxon>Mammalia</taxon>
        <taxon>Eutheria</taxon>
        <taxon>Euarchontoglires</taxon>
        <taxon>Primates</taxon>
        <taxon>Haplorrhini</taxon>
        <taxon>Catarrhini</taxon>
        <taxon>Hylobatidae</taxon>
        <taxon>Hylobates</taxon>
    </lineage>
</organism>
<sequence length="165" mass="18012">MVNPTVFFDIAVDGEPLGRVSFELFADKVPKTAENFRALSTGEKGFGYKGSCFHRIIPGFMCQGGDFTRHNGTGGKSIYGEKFEDENFILKHTGPGILSMANAGPNTNGSQFFICTAKTEWLDGKHVVFGKVKEGMNIVEAMERFGSRNGKTSKKITIADCGQLE</sequence>
<comment type="function">
    <text evidence="1 2">Catalyzes the cis-trans isomerization of proline imidic peptide bonds in oligopeptides (By similarity). Exerts a strong chemotactic effect on leukocytes partly through activation of one of its membrane receptors BSG/CD147, initiating a signaling cascade that culminates in MAPK/ERK activation (By similarity). Activates endothelial cells (ECs) in a proinflammatory manner by stimulating activation of NF-kappa-B and ERK, JNK and p38 MAP-kinases and by inducing expression of adhesion molecules including SELE and VCAM1 (By similarity). Induces apoptosis in ECs by promoting the FOXO1-dependent expression of CCL2 and BCL2L11 which are involved in EC chemotaxis and apoptosis (By similarity). In response to oxidative stress, initiates proapoptotic and antiapoptotic signaling in ECs via activation of NF-kappa-B and AKT1 and up-regulation of antiapoptotic protein BCL2 (By similarity). Negatively regulates MAP3K5/ASK1 kinase activity, autophosphorylation and oxidative stress-induced apoptosis mediated by MAP3K5/ASK1 (By similarity). Necessary for the assembly of TARDBP in heterogeneous nuclear ribonucleoprotein (hnRNP) complexes and regulates TARDBP binding to RNA UG repeats and TARDBP-dependent expression of HDAC6, ATG7 and VCP which are involved in clearance of protein aggregates (By similarity). Plays an important role in platelet activation and aggregation (By similarity). Regulates calcium mobilization and integrin ITGA2B:ITGB3 bidirectional signaling via increased ROS production as well as by facilitating the interaction between integrin and the cell cytoskeleton (By similarity). Binds heparan sulfate glycosaminoglycans (By similarity).</text>
</comment>
<comment type="catalytic activity">
    <reaction evidence="2">
        <text>[protein]-peptidylproline (omega=180) = [protein]-peptidylproline (omega=0)</text>
        <dbReference type="Rhea" id="RHEA:16237"/>
        <dbReference type="Rhea" id="RHEA-COMP:10747"/>
        <dbReference type="Rhea" id="RHEA-COMP:10748"/>
        <dbReference type="ChEBI" id="CHEBI:83833"/>
        <dbReference type="ChEBI" id="CHEBI:83834"/>
        <dbReference type="EC" id="5.2.1.8"/>
    </reaction>
</comment>
<comment type="activity regulation">
    <text evidence="2">Binds cyclosporin A (CsA). CsA mediates some of its effects via an inhibitory action on PPIase.</text>
</comment>
<comment type="subunit">
    <text evidence="1 2">Interacts with protein phosphatase PPP3CA/calcineurin A (By similarity). Interacts with isoform 2 of BSG/CD147 (By similarity). Interacts with FOXO1; the interaction promotes FOXO1 dephosphorylation, nuclear accumulation and transcriptional activity (By similarity). Interacts with integrin ITGA2B:ITGB3; the interaction is ROS and peptidyl-prolyl cis-trans isomerase (PPIase) activity-dependent and is increased in the presence of thrombin (By similarity). Interacts with MAP3K5 (By similarity). Interacts with TARDBP; the interaction is dependent on the RNA-binding activity of TARDBP and the PPIase activity of PPIA/CYPA and the acetylation of PPIA/CYPA at Lys-125 favors the interaction (By similarity). Interacts with HNRNPA1, HNRNPA2B1, HNRNPC, RBMX, HNRNPK and HNRNPM (By similarity).</text>
</comment>
<comment type="subcellular location">
    <subcellularLocation>
        <location evidence="2">Cytoplasm</location>
    </subcellularLocation>
    <subcellularLocation>
        <location evidence="2">Secreted</location>
    </subcellularLocation>
    <subcellularLocation>
        <location evidence="2">Nucleus</location>
    </subcellularLocation>
    <text evidence="2">Secretion occurs in response to oxidative stress in vascular smooth muscle through a vesicular secretory pathway that involves actin remodeling and myosin II activation, and mediates ERK1/2 activation.</text>
</comment>
<comment type="PTM">
    <text evidence="2">Acetylation at Lys-125 markedly inhibits catalysis of cis to trans isomerization (By similarity). PPIA acetylation also antagonizes the immunosuppressive effects of cyclosporine by inhibiting the sequential steps of cyclosporine binding and calcineurin inhibition (By similarity). Acetylation at Lys-125 favors the interaction with TARDBP (By similarity).</text>
</comment>
<comment type="similarity">
    <text evidence="5">Belongs to the cyclophilin-type PPIase family. PPIase A subfamily.</text>
</comment>
<name>PPIA_HYLLA</name>